<evidence type="ECO:0000255" key="1">
    <source>
        <dbReference type="HAMAP-Rule" id="MF_00469"/>
    </source>
</evidence>
<name>TRHO_BURM7</name>
<reference key="1">
    <citation type="journal article" date="2010" name="Genome Biol. Evol.">
        <title>Continuing evolution of Burkholderia mallei through genome reduction and large-scale rearrangements.</title>
        <authorList>
            <person name="Losada L."/>
            <person name="Ronning C.M."/>
            <person name="DeShazer D."/>
            <person name="Woods D."/>
            <person name="Fedorova N."/>
            <person name="Kim H.S."/>
            <person name="Shabalina S.A."/>
            <person name="Pearson T.R."/>
            <person name="Brinkac L."/>
            <person name="Tan P."/>
            <person name="Nandi T."/>
            <person name="Crabtree J."/>
            <person name="Badger J."/>
            <person name="Beckstrom-Sternberg S."/>
            <person name="Saqib M."/>
            <person name="Schutzer S.E."/>
            <person name="Keim P."/>
            <person name="Nierman W.C."/>
        </authorList>
    </citation>
    <scope>NUCLEOTIDE SEQUENCE [LARGE SCALE GENOMIC DNA]</scope>
    <source>
        <strain>NCTC 10247</strain>
    </source>
</reference>
<accession>A3MI14</accession>
<feature type="chain" id="PRO_1000013728" description="tRNA uridine(34) hydroxylase">
    <location>
        <begin position="1"/>
        <end position="299"/>
    </location>
</feature>
<feature type="domain" description="Rhodanese" evidence="1">
    <location>
        <begin position="132"/>
        <end position="226"/>
    </location>
</feature>
<feature type="active site" description="Cysteine persulfide intermediate" evidence="1">
    <location>
        <position position="186"/>
    </location>
</feature>
<proteinExistence type="inferred from homology"/>
<protein>
    <recommendedName>
        <fullName evidence="1">tRNA uridine(34) hydroxylase</fullName>
        <ecNumber evidence="1">1.14.-.-</ecNumber>
    </recommendedName>
    <alternativeName>
        <fullName evidence="1">tRNA hydroxylation protein O</fullName>
    </alternativeName>
</protein>
<dbReference type="EC" id="1.14.-.-" evidence="1"/>
<dbReference type="EMBL" id="CP000548">
    <property type="protein sequence ID" value="ABO06168.1"/>
    <property type="molecule type" value="Genomic_DNA"/>
</dbReference>
<dbReference type="RefSeq" id="WP_004185449.1">
    <property type="nucleotide sequence ID" value="NZ_CP007802.1"/>
</dbReference>
<dbReference type="SMR" id="A3MI14"/>
<dbReference type="KEGG" id="bmaz:BM44_2677"/>
<dbReference type="KEGG" id="bmn:BMA10247_0325"/>
<dbReference type="PATRIC" id="fig|320389.8.peg.3024"/>
<dbReference type="GO" id="GO:0016705">
    <property type="term" value="F:oxidoreductase activity, acting on paired donors, with incorporation or reduction of molecular oxygen"/>
    <property type="evidence" value="ECO:0007669"/>
    <property type="project" value="UniProtKB-UniRule"/>
</dbReference>
<dbReference type="GO" id="GO:0006400">
    <property type="term" value="P:tRNA modification"/>
    <property type="evidence" value="ECO:0007669"/>
    <property type="project" value="UniProtKB-UniRule"/>
</dbReference>
<dbReference type="CDD" id="cd01518">
    <property type="entry name" value="RHOD_YceA"/>
    <property type="match status" value="1"/>
</dbReference>
<dbReference type="Gene3D" id="3.30.70.100">
    <property type="match status" value="1"/>
</dbReference>
<dbReference type="Gene3D" id="3.40.250.10">
    <property type="entry name" value="Rhodanese-like domain"/>
    <property type="match status" value="1"/>
</dbReference>
<dbReference type="HAMAP" id="MF_00469">
    <property type="entry name" value="TrhO"/>
    <property type="match status" value="1"/>
</dbReference>
<dbReference type="InterPro" id="IPR001763">
    <property type="entry name" value="Rhodanese-like_dom"/>
</dbReference>
<dbReference type="InterPro" id="IPR036873">
    <property type="entry name" value="Rhodanese-like_dom_sf"/>
</dbReference>
<dbReference type="InterPro" id="IPR020936">
    <property type="entry name" value="TrhO"/>
</dbReference>
<dbReference type="InterPro" id="IPR040503">
    <property type="entry name" value="TRHO_N"/>
</dbReference>
<dbReference type="NCBIfam" id="NF003703">
    <property type="entry name" value="PRK05320.1"/>
    <property type="match status" value="1"/>
</dbReference>
<dbReference type="PANTHER" id="PTHR43268:SF3">
    <property type="entry name" value="RHODANESE-LIKE DOMAIN-CONTAINING PROTEIN 7-RELATED"/>
    <property type="match status" value="1"/>
</dbReference>
<dbReference type="PANTHER" id="PTHR43268">
    <property type="entry name" value="THIOSULFATE SULFURTRANSFERASE/RHODANESE-LIKE DOMAIN-CONTAINING PROTEIN 2"/>
    <property type="match status" value="1"/>
</dbReference>
<dbReference type="Pfam" id="PF00581">
    <property type="entry name" value="Rhodanese"/>
    <property type="match status" value="1"/>
</dbReference>
<dbReference type="Pfam" id="PF17773">
    <property type="entry name" value="UPF0176_N"/>
    <property type="match status" value="1"/>
</dbReference>
<dbReference type="SMART" id="SM00450">
    <property type="entry name" value="RHOD"/>
    <property type="match status" value="1"/>
</dbReference>
<dbReference type="SUPFAM" id="SSF52821">
    <property type="entry name" value="Rhodanese/Cell cycle control phosphatase"/>
    <property type="match status" value="1"/>
</dbReference>
<dbReference type="PROSITE" id="PS50206">
    <property type="entry name" value="RHODANESE_3"/>
    <property type="match status" value="1"/>
</dbReference>
<comment type="function">
    <text evidence="1">Catalyzes oxygen-dependent 5-hydroxyuridine (ho5U) modification at position 34 in tRNAs.</text>
</comment>
<comment type="catalytic activity">
    <reaction evidence="1">
        <text>uridine(34) in tRNA + AH2 + O2 = 5-hydroxyuridine(34) in tRNA + A + H2O</text>
        <dbReference type="Rhea" id="RHEA:64224"/>
        <dbReference type="Rhea" id="RHEA-COMP:11727"/>
        <dbReference type="Rhea" id="RHEA-COMP:13381"/>
        <dbReference type="ChEBI" id="CHEBI:13193"/>
        <dbReference type="ChEBI" id="CHEBI:15377"/>
        <dbReference type="ChEBI" id="CHEBI:15379"/>
        <dbReference type="ChEBI" id="CHEBI:17499"/>
        <dbReference type="ChEBI" id="CHEBI:65315"/>
        <dbReference type="ChEBI" id="CHEBI:136877"/>
    </reaction>
</comment>
<comment type="similarity">
    <text evidence="1">Belongs to the TrhO family.</text>
</comment>
<sequence>MTTVNLAAYRFVSLDSIEQWRPLVAARCNTLGLRGTILLAPEGINLFIAGPREATDAFVDYIRHDPLFEGKFADLPFKESLSDSQPFRRMLVRLKREIITMKKPAIKPELGRAPSVDARTLKAWLDQGHDDAGRPVVMLDTRNAFEVDVGTFDRALDYRIDKFSEFPAVIEANRADLEGKTIVSFCTGGIRCEKAAIHMKDVGIENVYQLEGGILKYFEEVGGAHYHGDCFVFDYRTALNPQLAPTADVTCFACRAVVPADAQQSPLYVPGKCCPACHPGDSGTPGRRAEPGAEPARAV</sequence>
<organism>
    <name type="scientific">Burkholderia mallei (strain NCTC 10247)</name>
    <dbReference type="NCBI Taxonomy" id="320389"/>
    <lineage>
        <taxon>Bacteria</taxon>
        <taxon>Pseudomonadati</taxon>
        <taxon>Pseudomonadota</taxon>
        <taxon>Betaproteobacteria</taxon>
        <taxon>Burkholderiales</taxon>
        <taxon>Burkholderiaceae</taxon>
        <taxon>Burkholderia</taxon>
        <taxon>pseudomallei group</taxon>
    </lineage>
</organism>
<keyword id="KW-0560">Oxidoreductase</keyword>
<keyword id="KW-0819">tRNA processing</keyword>
<gene>
    <name evidence="1" type="primary">trhO</name>
    <name type="ordered locus">BMA10247_0325</name>
</gene>